<evidence type="ECO:0000255" key="1">
    <source>
        <dbReference type="HAMAP-Rule" id="MF_01342"/>
    </source>
</evidence>
<evidence type="ECO:0000305" key="2"/>
<dbReference type="EMBL" id="AP009552">
    <property type="protein sequence ID" value="BAG05558.1"/>
    <property type="molecule type" value="Genomic_DNA"/>
</dbReference>
<dbReference type="RefSeq" id="WP_002734310.1">
    <property type="nucleotide sequence ID" value="NC_010296.1"/>
</dbReference>
<dbReference type="SMR" id="B0JHZ6"/>
<dbReference type="STRING" id="449447.MAE_57360"/>
<dbReference type="PaxDb" id="449447-MAE_57360"/>
<dbReference type="EnsemblBacteria" id="BAG05558">
    <property type="protein sequence ID" value="BAG05558"/>
    <property type="gene ID" value="MAE_57360"/>
</dbReference>
<dbReference type="GeneID" id="66707894"/>
<dbReference type="KEGG" id="mar:MAE_57360"/>
<dbReference type="eggNOG" id="COG0197">
    <property type="taxonomic scope" value="Bacteria"/>
</dbReference>
<dbReference type="HOGENOM" id="CLU_078858_2_1_3"/>
<dbReference type="BioCyc" id="MAER449447:MAE_RS24995-MONOMER"/>
<dbReference type="Proteomes" id="UP000001510">
    <property type="component" value="Chromosome"/>
</dbReference>
<dbReference type="GO" id="GO:0022625">
    <property type="term" value="C:cytosolic large ribosomal subunit"/>
    <property type="evidence" value="ECO:0007669"/>
    <property type="project" value="TreeGrafter"/>
</dbReference>
<dbReference type="GO" id="GO:0019843">
    <property type="term" value="F:rRNA binding"/>
    <property type="evidence" value="ECO:0007669"/>
    <property type="project" value="UniProtKB-UniRule"/>
</dbReference>
<dbReference type="GO" id="GO:0003735">
    <property type="term" value="F:structural constituent of ribosome"/>
    <property type="evidence" value="ECO:0007669"/>
    <property type="project" value="InterPro"/>
</dbReference>
<dbReference type="GO" id="GO:0000049">
    <property type="term" value="F:tRNA binding"/>
    <property type="evidence" value="ECO:0007669"/>
    <property type="project" value="UniProtKB-KW"/>
</dbReference>
<dbReference type="GO" id="GO:0006412">
    <property type="term" value="P:translation"/>
    <property type="evidence" value="ECO:0007669"/>
    <property type="project" value="UniProtKB-UniRule"/>
</dbReference>
<dbReference type="CDD" id="cd01433">
    <property type="entry name" value="Ribosomal_L16_L10e"/>
    <property type="match status" value="1"/>
</dbReference>
<dbReference type="FunFam" id="3.90.1170.10:FF:000001">
    <property type="entry name" value="50S ribosomal protein L16"/>
    <property type="match status" value="1"/>
</dbReference>
<dbReference type="Gene3D" id="3.90.1170.10">
    <property type="entry name" value="Ribosomal protein L10e/L16"/>
    <property type="match status" value="1"/>
</dbReference>
<dbReference type="HAMAP" id="MF_01342">
    <property type="entry name" value="Ribosomal_uL16"/>
    <property type="match status" value="1"/>
</dbReference>
<dbReference type="InterPro" id="IPR047873">
    <property type="entry name" value="Ribosomal_uL16"/>
</dbReference>
<dbReference type="InterPro" id="IPR000114">
    <property type="entry name" value="Ribosomal_uL16_bact-type"/>
</dbReference>
<dbReference type="InterPro" id="IPR020798">
    <property type="entry name" value="Ribosomal_uL16_CS"/>
</dbReference>
<dbReference type="InterPro" id="IPR016180">
    <property type="entry name" value="Ribosomal_uL16_dom"/>
</dbReference>
<dbReference type="InterPro" id="IPR036920">
    <property type="entry name" value="Ribosomal_uL16_sf"/>
</dbReference>
<dbReference type="NCBIfam" id="TIGR01164">
    <property type="entry name" value="rplP_bact"/>
    <property type="match status" value="1"/>
</dbReference>
<dbReference type="PANTHER" id="PTHR12220">
    <property type="entry name" value="50S/60S RIBOSOMAL PROTEIN L16"/>
    <property type="match status" value="1"/>
</dbReference>
<dbReference type="PANTHER" id="PTHR12220:SF13">
    <property type="entry name" value="LARGE RIBOSOMAL SUBUNIT PROTEIN UL16M"/>
    <property type="match status" value="1"/>
</dbReference>
<dbReference type="Pfam" id="PF00252">
    <property type="entry name" value="Ribosomal_L16"/>
    <property type="match status" value="1"/>
</dbReference>
<dbReference type="PRINTS" id="PR00060">
    <property type="entry name" value="RIBOSOMALL16"/>
</dbReference>
<dbReference type="SUPFAM" id="SSF54686">
    <property type="entry name" value="Ribosomal protein L16p/L10e"/>
    <property type="match status" value="1"/>
</dbReference>
<dbReference type="PROSITE" id="PS00586">
    <property type="entry name" value="RIBOSOMAL_L16_1"/>
    <property type="match status" value="1"/>
</dbReference>
<dbReference type="PROSITE" id="PS00701">
    <property type="entry name" value="RIBOSOMAL_L16_2"/>
    <property type="match status" value="1"/>
</dbReference>
<feature type="chain" id="PRO_1000086763" description="Large ribosomal subunit protein uL16">
    <location>
        <begin position="1"/>
        <end position="139"/>
    </location>
</feature>
<accession>B0JHZ6</accession>
<proteinExistence type="inferred from homology"/>
<keyword id="KW-0687">Ribonucleoprotein</keyword>
<keyword id="KW-0689">Ribosomal protein</keyword>
<keyword id="KW-0694">RNA-binding</keyword>
<keyword id="KW-0699">rRNA-binding</keyword>
<keyword id="KW-0820">tRNA-binding</keyword>
<comment type="function">
    <text evidence="1">Binds 23S rRNA and is also seen to make contacts with the A and possibly P site tRNAs.</text>
</comment>
<comment type="subunit">
    <text evidence="1">Part of the 50S ribosomal subunit.</text>
</comment>
<comment type="similarity">
    <text evidence="1">Belongs to the universal ribosomal protein uL16 family.</text>
</comment>
<sequence>MLSPKRTKFRKQQRGRMRGLATGGNTINFGDFALQATEPCWITSRQIEAARRAMTRYIRRGGKIWIRVFPDKPVTQRAAETRMGSGKGSPEFWVAVVKPGFIMFEIAGVAEPVAREAMRLAAQKLPIKTKFITREEDFV</sequence>
<organism>
    <name type="scientific">Microcystis aeruginosa (strain NIES-843 / IAM M-2473)</name>
    <dbReference type="NCBI Taxonomy" id="449447"/>
    <lineage>
        <taxon>Bacteria</taxon>
        <taxon>Bacillati</taxon>
        <taxon>Cyanobacteriota</taxon>
        <taxon>Cyanophyceae</taxon>
        <taxon>Oscillatoriophycideae</taxon>
        <taxon>Chroococcales</taxon>
        <taxon>Microcystaceae</taxon>
        <taxon>Microcystis</taxon>
    </lineage>
</organism>
<name>RL16_MICAN</name>
<gene>
    <name evidence="1" type="primary">rplP</name>
    <name evidence="1" type="synonym">rpl16</name>
    <name type="ordered locus">MAE_57360</name>
</gene>
<reference key="1">
    <citation type="journal article" date="2007" name="DNA Res.">
        <title>Complete genomic structure of the bloom-forming toxic cyanobacterium Microcystis aeruginosa NIES-843.</title>
        <authorList>
            <person name="Kaneko T."/>
            <person name="Nakajima N."/>
            <person name="Okamoto S."/>
            <person name="Suzuki I."/>
            <person name="Tanabe Y."/>
            <person name="Tamaoki M."/>
            <person name="Nakamura Y."/>
            <person name="Kasai F."/>
            <person name="Watanabe A."/>
            <person name="Kawashima K."/>
            <person name="Kishida Y."/>
            <person name="Ono A."/>
            <person name="Shimizu Y."/>
            <person name="Takahashi C."/>
            <person name="Minami C."/>
            <person name="Fujishiro T."/>
            <person name="Kohara M."/>
            <person name="Katoh M."/>
            <person name="Nakazaki N."/>
            <person name="Nakayama S."/>
            <person name="Yamada M."/>
            <person name="Tabata S."/>
            <person name="Watanabe M.M."/>
        </authorList>
    </citation>
    <scope>NUCLEOTIDE SEQUENCE [LARGE SCALE GENOMIC DNA]</scope>
    <source>
        <strain>NIES-843 / IAM M-247</strain>
    </source>
</reference>
<protein>
    <recommendedName>
        <fullName evidence="1">Large ribosomal subunit protein uL16</fullName>
    </recommendedName>
    <alternativeName>
        <fullName evidence="2">50S ribosomal protein L16</fullName>
    </alternativeName>
</protein>